<comment type="function">
    <text evidence="1">Putative transcription factor.</text>
</comment>
<comment type="subcellular location">
    <subcellularLocation>
        <location evidence="3">Nucleus</location>
    </subcellularLocation>
</comment>
<dbReference type="EMBL" id="AC011809">
    <property type="protein sequence ID" value="AAF27101.1"/>
    <property type="molecule type" value="Genomic_DNA"/>
</dbReference>
<dbReference type="EMBL" id="CP002684">
    <property type="protein sequence ID" value="AEE29764.1"/>
    <property type="molecule type" value="Genomic_DNA"/>
</dbReference>
<dbReference type="PIR" id="G86321">
    <property type="entry name" value="G86321"/>
</dbReference>
<dbReference type="RefSeq" id="NP_173314.1">
    <property type="nucleotide sequence ID" value="NM_101737.2"/>
</dbReference>
<dbReference type="SMR" id="Q9M9U9"/>
<dbReference type="STRING" id="3702.Q9M9U9"/>
<dbReference type="iPTMnet" id="Q9M9U9"/>
<dbReference type="PaxDb" id="3702-AT1G18790.1"/>
<dbReference type="EnsemblPlants" id="AT1G18790.1">
    <property type="protein sequence ID" value="AT1G18790.1"/>
    <property type="gene ID" value="AT1G18790"/>
</dbReference>
<dbReference type="GeneID" id="838461"/>
<dbReference type="Gramene" id="AT1G18790.1">
    <property type="protein sequence ID" value="AT1G18790.1"/>
    <property type="gene ID" value="AT1G18790"/>
</dbReference>
<dbReference type="KEGG" id="ath:AT1G18790"/>
<dbReference type="Araport" id="AT1G18790"/>
<dbReference type="TAIR" id="AT1G18790">
    <property type="gene designation" value="RKD1"/>
</dbReference>
<dbReference type="eggNOG" id="ENOG502QSPQ">
    <property type="taxonomic scope" value="Eukaryota"/>
</dbReference>
<dbReference type="HOGENOM" id="CLU_071153_0_0_1"/>
<dbReference type="InParanoid" id="Q9M9U9"/>
<dbReference type="OMA" id="CAYSSYA"/>
<dbReference type="PhylomeDB" id="Q9M9U9"/>
<dbReference type="PRO" id="PR:Q9M9U9"/>
<dbReference type="Proteomes" id="UP000006548">
    <property type="component" value="Chromosome 1"/>
</dbReference>
<dbReference type="GO" id="GO:0005634">
    <property type="term" value="C:nucleus"/>
    <property type="evidence" value="ECO:0007669"/>
    <property type="project" value="UniProtKB-SubCell"/>
</dbReference>
<dbReference type="GO" id="GO:0003677">
    <property type="term" value="F:DNA binding"/>
    <property type="evidence" value="ECO:0007669"/>
    <property type="project" value="UniProtKB-KW"/>
</dbReference>
<dbReference type="GO" id="GO:0003700">
    <property type="term" value="F:DNA-binding transcription factor activity"/>
    <property type="evidence" value="ECO:0000250"/>
    <property type="project" value="TAIR"/>
</dbReference>
<dbReference type="GO" id="GO:0051302">
    <property type="term" value="P:regulation of cell division"/>
    <property type="evidence" value="ECO:0000315"/>
    <property type="project" value="TAIR"/>
</dbReference>
<dbReference type="GO" id="GO:0006355">
    <property type="term" value="P:regulation of DNA-templated transcription"/>
    <property type="evidence" value="ECO:0000304"/>
    <property type="project" value="TAIR"/>
</dbReference>
<dbReference type="InterPro" id="IPR044607">
    <property type="entry name" value="RKD-like"/>
</dbReference>
<dbReference type="InterPro" id="IPR003035">
    <property type="entry name" value="RWP-RK_dom"/>
</dbReference>
<dbReference type="PANTHER" id="PTHR46373:SF20">
    <property type="entry name" value="PROTEIN RKD1"/>
    <property type="match status" value="1"/>
</dbReference>
<dbReference type="PANTHER" id="PTHR46373">
    <property type="entry name" value="PROTEIN RKD4"/>
    <property type="match status" value="1"/>
</dbReference>
<dbReference type="Pfam" id="PF02042">
    <property type="entry name" value="RWP-RK"/>
    <property type="match status" value="1"/>
</dbReference>
<dbReference type="PROSITE" id="PS51519">
    <property type="entry name" value="RWP_RK"/>
    <property type="match status" value="1"/>
</dbReference>
<reference key="1">
    <citation type="journal article" date="2000" name="Nature">
        <title>Sequence and analysis of chromosome 1 of the plant Arabidopsis thaliana.</title>
        <authorList>
            <person name="Theologis A."/>
            <person name="Ecker J.R."/>
            <person name="Palm C.J."/>
            <person name="Federspiel N.A."/>
            <person name="Kaul S."/>
            <person name="White O."/>
            <person name="Alonso J."/>
            <person name="Altafi H."/>
            <person name="Araujo R."/>
            <person name="Bowman C.L."/>
            <person name="Brooks S.Y."/>
            <person name="Buehler E."/>
            <person name="Chan A."/>
            <person name="Chao Q."/>
            <person name="Chen H."/>
            <person name="Cheuk R.F."/>
            <person name="Chin C.W."/>
            <person name="Chung M.K."/>
            <person name="Conn L."/>
            <person name="Conway A.B."/>
            <person name="Conway A.R."/>
            <person name="Creasy T.H."/>
            <person name="Dewar K."/>
            <person name="Dunn P."/>
            <person name="Etgu P."/>
            <person name="Feldblyum T.V."/>
            <person name="Feng J.-D."/>
            <person name="Fong B."/>
            <person name="Fujii C.Y."/>
            <person name="Gill J.E."/>
            <person name="Goldsmith A.D."/>
            <person name="Haas B."/>
            <person name="Hansen N.F."/>
            <person name="Hughes B."/>
            <person name="Huizar L."/>
            <person name="Hunter J.L."/>
            <person name="Jenkins J."/>
            <person name="Johnson-Hopson C."/>
            <person name="Khan S."/>
            <person name="Khaykin E."/>
            <person name="Kim C.J."/>
            <person name="Koo H.L."/>
            <person name="Kremenetskaia I."/>
            <person name="Kurtz D.B."/>
            <person name="Kwan A."/>
            <person name="Lam B."/>
            <person name="Langin-Hooper S."/>
            <person name="Lee A."/>
            <person name="Lee J.M."/>
            <person name="Lenz C.A."/>
            <person name="Li J.H."/>
            <person name="Li Y.-P."/>
            <person name="Lin X."/>
            <person name="Liu S.X."/>
            <person name="Liu Z.A."/>
            <person name="Luros J.S."/>
            <person name="Maiti R."/>
            <person name="Marziali A."/>
            <person name="Militscher J."/>
            <person name="Miranda M."/>
            <person name="Nguyen M."/>
            <person name="Nierman W.C."/>
            <person name="Osborne B.I."/>
            <person name="Pai G."/>
            <person name="Peterson J."/>
            <person name="Pham P.K."/>
            <person name="Rizzo M."/>
            <person name="Rooney T."/>
            <person name="Rowley D."/>
            <person name="Sakano H."/>
            <person name="Salzberg S.L."/>
            <person name="Schwartz J.R."/>
            <person name="Shinn P."/>
            <person name="Southwick A.M."/>
            <person name="Sun H."/>
            <person name="Tallon L.J."/>
            <person name="Tambunga G."/>
            <person name="Toriumi M.J."/>
            <person name="Town C.D."/>
            <person name="Utterback T."/>
            <person name="Van Aken S."/>
            <person name="Vaysberg M."/>
            <person name="Vysotskaia V.S."/>
            <person name="Walker M."/>
            <person name="Wu D."/>
            <person name="Yu G."/>
            <person name="Fraser C.M."/>
            <person name="Venter J.C."/>
            <person name="Davis R.W."/>
        </authorList>
    </citation>
    <scope>NUCLEOTIDE SEQUENCE [LARGE SCALE GENOMIC DNA]</scope>
    <source>
        <strain>cv. Columbia</strain>
    </source>
</reference>
<reference key="2">
    <citation type="journal article" date="2017" name="Plant J.">
        <title>Araport11: a complete reannotation of the Arabidopsis thaliana reference genome.</title>
        <authorList>
            <person name="Cheng C.Y."/>
            <person name="Krishnakumar V."/>
            <person name="Chan A.P."/>
            <person name="Thibaud-Nissen F."/>
            <person name="Schobel S."/>
            <person name="Town C.D."/>
        </authorList>
    </citation>
    <scope>GENOME REANNOTATION</scope>
    <source>
        <strain>cv. Columbia</strain>
    </source>
</reference>
<reference key="3">
    <citation type="journal article" date="2005" name="J. Mol. Evol.">
        <title>Evolution of NIN-like proteins in Arabidopsis, rice, and Lotus japonicus.</title>
        <authorList>
            <person name="Schauser L."/>
            <person name="Wieloch W."/>
            <person name="Stougaard J."/>
        </authorList>
    </citation>
    <scope>GENE FAMILY</scope>
    <scope>NOMENCLATURE</scope>
</reference>
<feature type="chain" id="PRO_0000401495" description="Protein RKD1">
    <location>
        <begin position="1"/>
        <end position="269"/>
    </location>
</feature>
<feature type="domain" description="RWP-RK" evidence="3">
    <location>
        <begin position="106"/>
        <end position="195"/>
    </location>
</feature>
<feature type="region of interest" description="Disordered" evidence="4">
    <location>
        <begin position="230"/>
        <end position="269"/>
    </location>
</feature>
<feature type="coiled-coil region" evidence="2">
    <location>
        <begin position="175"/>
        <end position="216"/>
    </location>
</feature>
<feature type="compositionally biased region" description="Low complexity" evidence="4">
    <location>
        <begin position="249"/>
        <end position="269"/>
    </location>
</feature>
<gene>
    <name type="primary">RKD1</name>
    <name type="ordered locus">At1g18790</name>
    <name type="ORF">F6A14.11</name>
</gene>
<name>RKD1_ARATH</name>
<organism>
    <name type="scientific">Arabidopsis thaliana</name>
    <name type="common">Mouse-ear cress</name>
    <dbReference type="NCBI Taxonomy" id="3702"/>
    <lineage>
        <taxon>Eukaryota</taxon>
        <taxon>Viridiplantae</taxon>
        <taxon>Streptophyta</taxon>
        <taxon>Embryophyta</taxon>
        <taxon>Tracheophyta</taxon>
        <taxon>Spermatophyta</taxon>
        <taxon>Magnoliopsida</taxon>
        <taxon>eudicotyledons</taxon>
        <taxon>Gunneridae</taxon>
        <taxon>Pentapetalae</taxon>
        <taxon>rosids</taxon>
        <taxon>malvids</taxon>
        <taxon>Brassicales</taxon>
        <taxon>Brassicaceae</taxon>
        <taxon>Camelineae</taxon>
        <taxon>Arabidopsis</taxon>
    </lineage>
</organism>
<proteinExistence type="inferred from homology"/>
<accession>Q9M9U9</accession>
<sequence length="269" mass="30638">MKSFCKLEYDQVFGKENNSFSFLNHSSLYSHQSELANPFFELEDEMLPSATSSNCFTSASSFLALPDLEPISIVSHEADILSVYGSASWTAEETMFVSDFAKKSETTTTKKRRCREECFSSCSVSKTLSKETISLYFYMPITQAARELNIGLTLLKKRCRELGIKRWPHRKLMSLQKLISNVKELEKMEGEENEDKLRNALEKLEKEKKTIEKLPDLKFEDKTKRLRQACFKANHKRKRRSGMSTPITSSSSSASASSSSYSSVSGFER</sequence>
<evidence type="ECO:0000250" key="1"/>
<evidence type="ECO:0000255" key="2"/>
<evidence type="ECO:0000255" key="3">
    <source>
        <dbReference type="PROSITE-ProRule" id="PRU00852"/>
    </source>
</evidence>
<evidence type="ECO:0000256" key="4">
    <source>
        <dbReference type="SAM" id="MobiDB-lite"/>
    </source>
</evidence>
<protein>
    <recommendedName>
        <fullName>Protein RKD1</fullName>
        <shortName>AtRKD1</shortName>
    </recommendedName>
    <alternativeName>
        <fullName>RWP-RK domain-containing protein 1</fullName>
    </alternativeName>
</protein>
<keyword id="KW-0175">Coiled coil</keyword>
<keyword id="KW-0238">DNA-binding</keyword>
<keyword id="KW-0539">Nucleus</keyword>
<keyword id="KW-1185">Reference proteome</keyword>
<keyword id="KW-0804">Transcription</keyword>
<keyword id="KW-0805">Transcription regulation</keyword>